<reference key="1">
    <citation type="journal article" date="1995" name="Yeast">
        <title>The DNA sequence of a 7941 bp fragment of the left arm of chromosome VII of Saccharomyces cerevisiae contains four open reading frames including the multicopy suppressor gene of the pop2 mutation and a putative serine/threonine protein kinase gene.</title>
        <authorList>
            <person name="Coglievina M."/>
            <person name="Bertani I."/>
            <person name="Klima R."/>
            <person name="Zaccaria P."/>
            <person name="Bruschi C.V."/>
        </authorList>
    </citation>
    <scope>NUCLEOTIDE SEQUENCE [GENOMIC DNA]</scope>
    <source>
        <strain>ATCC 96604 / S288c / FY1679</strain>
    </source>
</reference>
<reference key="2">
    <citation type="journal article" date="1997" name="Nature">
        <title>The nucleotide sequence of Saccharomyces cerevisiae chromosome VII.</title>
        <authorList>
            <person name="Tettelin H."/>
            <person name="Agostoni-Carbone M.L."/>
            <person name="Albermann K."/>
            <person name="Albers M."/>
            <person name="Arroyo J."/>
            <person name="Backes U."/>
            <person name="Barreiros T."/>
            <person name="Bertani I."/>
            <person name="Bjourson A.J."/>
            <person name="Brueckner M."/>
            <person name="Bruschi C.V."/>
            <person name="Carignani G."/>
            <person name="Castagnoli L."/>
            <person name="Cerdan E."/>
            <person name="Clemente M.L."/>
            <person name="Coblenz A."/>
            <person name="Coglievina M."/>
            <person name="Coissac E."/>
            <person name="Defoor E."/>
            <person name="Del Bino S."/>
            <person name="Delius H."/>
            <person name="Delneri D."/>
            <person name="de Wergifosse P."/>
            <person name="Dujon B."/>
            <person name="Durand P."/>
            <person name="Entian K.-D."/>
            <person name="Eraso P."/>
            <person name="Escribano V."/>
            <person name="Fabiani L."/>
            <person name="Fartmann B."/>
            <person name="Feroli F."/>
            <person name="Feuermann M."/>
            <person name="Frontali L."/>
            <person name="Garcia-Gonzalez M."/>
            <person name="Garcia-Saez M.I."/>
            <person name="Goffeau A."/>
            <person name="Guerreiro P."/>
            <person name="Hani J."/>
            <person name="Hansen M."/>
            <person name="Hebling U."/>
            <person name="Hernandez K."/>
            <person name="Heumann K."/>
            <person name="Hilger F."/>
            <person name="Hofmann B."/>
            <person name="Indge K.J."/>
            <person name="James C.M."/>
            <person name="Klima R."/>
            <person name="Koetter P."/>
            <person name="Kramer B."/>
            <person name="Kramer W."/>
            <person name="Lauquin G."/>
            <person name="Leuther H."/>
            <person name="Louis E.J."/>
            <person name="Maillier E."/>
            <person name="Marconi A."/>
            <person name="Martegani E."/>
            <person name="Mazon M.J."/>
            <person name="Mazzoni C."/>
            <person name="McReynolds A.D.K."/>
            <person name="Melchioretto P."/>
            <person name="Mewes H.-W."/>
            <person name="Minenkova O."/>
            <person name="Mueller-Auer S."/>
            <person name="Nawrocki A."/>
            <person name="Netter P."/>
            <person name="Neu R."/>
            <person name="Nombela C."/>
            <person name="Oliver S.G."/>
            <person name="Panzeri L."/>
            <person name="Paoluzi S."/>
            <person name="Plevani P."/>
            <person name="Portetelle D."/>
            <person name="Portillo F."/>
            <person name="Potier S."/>
            <person name="Purnelle B."/>
            <person name="Rieger M."/>
            <person name="Riles L."/>
            <person name="Rinaldi T."/>
            <person name="Robben J."/>
            <person name="Rodrigues-Pousada C."/>
            <person name="Rodriguez-Belmonte E."/>
            <person name="Rodriguez-Torres A.M."/>
            <person name="Rose M."/>
            <person name="Ruzzi M."/>
            <person name="Saliola M."/>
            <person name="Sanchez-Perez M."/>
            <person name="Schaefer B."/>
            <person name="Schaefer M."/>
            <person name="Scharfe M."/>
            <person name="Schmidheini T."/>
            <person name="Schreer A."/>
            <person name="Skala J."/>
            <person name="Souciet J.-L."/>
            <person name="Steensma H.Y."/>
            <person name="Talla E."/>
            <person name="Thierry A."/>
            <person name="Vandenbol M."/>
            <person name="van der Aart Q.J.M."/>
            <person name="Van Dyck L."/>
            <person name="Vanoni M."/>
            <person name="Verhasselt P."/>
            <person name="Voet M."/>
            <person name="Volckaert G."/>
            <person name="Wambutt R."/>
            <person name="Watson M.D."/>
            <person name="Weber N."/>
            <person name="Wedler E."/>
            <person name="Wedler H."/>
            <person name="Wipfli P."/>
            <person name="Wolf K."/>
            <person name="Wright L.F."/>
            <person name="Zaccaria P."/>
            <person name="Zimmermann M."/>
            <person name="Zollner A."/>
            <person name="Kleine K."/>
        </authorList>
    </citation>
    <scope>NUCLEOTIDE SEQUENCE [LARGE SCALE GENOMIC DNA]</scope>
    <source>
        <strain>ATCC 204508 / S288c</strain>
    </source>
</reference>
<reference key="3">
    <citation type="journal article" date="2014" name="G3 (Bethesda)">
        <title>The reference genome sequence of Saccharomyces cerevisiae: Then and now.</title>
        <authorList>
            <person name="Engel S.R."/>
            <person name="Dietrich F.S."/>
            <person name="Fisk D.G."/>
            <person name="Binkley G."/>
            <person name="Balakrishnan R."/>
            <person name="Costanzo M.C."/>
            <person name="Dwight S.S."/>
            <person name="Hitz B.C."/>
            <person name="Karra K."/>
            <person name="Nash R.S."/>
            <person name="Weng S."/>
            <person name="Wong E.D."/>
            <person name="Lloyd P."/>
            <person name="Skrzypek M.S."/>
            <person name="Miyasato S.R."/>
            <person name="Simison M."/>
            <person name="Cherry J.M."/>
        </authorList>
    </citation>
    <scope>GENOME REANNOTATION</scope>
    <source>
        <strain>ATCC 204508 / S288c</strain>
    </source>
</reference>
<reference key="4">
    <citation type="journal article" date="2000" name="Nat. Genet.">
        <title>Analysis of yeast protein kinases using protein chips.</title>
        <authorList>
            <person name="Zhu H."/>
            <person name="Klemic J.F."/>
            <person name="Chang S."/>
            <person name="Bertone P."/>
            <person name="Casamayor A."/>
            <person name="Klemic K.G."/>
            <person name="Smith D."/>
            <person name="Gerstein M."/>
            <person name="Reed M.A."/>
            <person name="Snyder M."/>
        </authorList>
    </citation>
    <scope>FUNCTION</scope>
</reference>
<reference key="5">
    <citation type="journal article" date="2003" name="Curr. Biol.">
        <title>Elm1p is one of three upstream kinases for the Saccharomyces cerevisiae SNF1 complex.</title>
        <authorList>
            <person name="Sutherland C.M."/>
            <person name="Hawley S.A."/>
            <person name="McCartney R.R."/>
            <person name="Leech A."/>
            <person name="Stark M.J.R."/>
            <person name="Schmidt M.C."/>
            <person name="Hardie D.G."/>
        </authorList>
    </citation>
    <scope>FUNCTION</scope>
</reference>
<reference key="6">
    <citation type="journal article" date="2003" name="Mol. Cell. Biol.">
        <title>Yeast Pak1 kinase associates with and activates Snf1.</title>
        <authorList>
            <person name="Nath N."/>
            <person name="McCartney R.R."/>
            <person name="Schmidt M.C."/>
        </authorList>
    </citation>
    <scope>AUTOPHOSPHORYLATION</scope>
    <scope>PHOSPHORYLATION OF GAL83; MIG1 AND SIP2</scope>
</reference>
<reference key="7">
    <citation type="journal article" date="2003" name="Proc. Natl. Acad. Sci. U.S.A.">
        <title>Activation of yeast Snf1 and mammalian AMP-activated protein kinase by upstream kinases.</title>
        <authorList>
            <person name="Hong S.-P."/>
            <person name="Leiper F.C."/>
            <person name="Woods A."/>
            <person name="Carling D."/>
            <person name="Carlson M."/>
        </authorList>
    </citation>
    <scope>PHOSPHORYLATION OF SNF1</scope>
</reference>
<reference key="8">
    <citation type="journal article" date="2004" name="Mol. Cell. Biol.">
        <title>Pak1 protein kinase regulates activation and nuclear localization of Snf1-Gal83 protein kinase.</title>
        <authorList>
            <person name="Hedbacker K."/>
            <person name="Hong S.-P."/>
            <person name="Carlson M."/>
        </authorList>
    </citation>
    <scope>FUNCTION</scope>
</reference>
<reference key="9">
    <citation type="journal article" date="2005" name="Cell Metab.">
        <title>Ca2+/calmodulin-dependent protein kinase kinase-beta acts upstream of AMP-activated protein kinase in mammalian cells.</title>
        <authorList>
            <person name="Woods A."/>
            <person name="Dickerson K."/>
            <person name="Heath R."/>
            <person name="Hong S.-P."/>
            <person name="Momcilovic M."/>
            <person name="Johnstone S.R."/>
            <person name="Carlson M."/>
            <person name="Carling D."/>
        </authorList>
    </citation>
    <scope>FUNCTION</scope>
</reference>
<reference key="10">
    <citation type="journal article" date="2005" name="Curr. Genet.">
        <title>Snf1 kinase complexes with different beta subunits display stress-dependent preferences for the three Snf1-activating kinases.</title>
        <authorList>
            <person name="McCartney R.R."/>
            <person name="Rubenstein E.M."/>
            <person name="Schmidt M.C."/>
        </authorList>
    </citation>
    <scope>FUNCTION</scope>
</reference>
<reference key="11">
    <citation type="journal article" date="2005" name="Eukaryot. Cell">
        <title>Role of Tos3, a Snf1 protein kinase kinase, during growth of Saccharomyces cerevisiae on nonfermentable carbon sources.</title>
        <authorList>
            <person name="Kim M.-D."/>
            <person name="Hong S.-P."/>
            <person name="Carlson M."/>
        </authorList>
    </citation>
    <scope>FUNCTION</scope>
</reference>
<reference key="12">
    <citation type="journal article" date="2006" name="Biochem. J.">
        <title>Purification and characterization of the three Snf1-activating kinases of Saccharomyces cerevisiae.</title>
        <authorList>
            <person name="Elbing K."/>
            <person name="McCartney R.R."/>
            <person name="Schmidt M.C."/>
        </authorList>
    </citation>
    <scope>FUNCTION</scope>
</reference>
<reference key="13">
    <citation type="journal article" date="2006" name="Eukaryot. Cell">
        <title>Regulatory domains of Snf1-activating kinases determine pathway specificity.</title>
        <authorList>
            <person name="Rubenstein E.M."/>
            <person name="McCartney R.R."/>
            <person name="Schmidt M.C."/>
        </authorList>
    </citation>
    <scope>FUNCTION</scope>
    <scope>DOMAIN</scope>
</reference>
<reference key="14">
    <citation type="journal article" date="2006" name="J. Biol. Chem.">
        <title>Mammalian TAK1 activates Snf1 protein kinase in yeast and phosphorylates AMP-activated protein kinase in vitro.</title>
        <authorList>
            <person name="Momcilovic M."/>
            <person name="Hong S.-P."/>
            <person name="Carlson M."/>
        </authorList>
    </citation>
    <scope>FUNCTION</scope>
</reference>
<reference key="15">
    <citation type="journal article" date="2007" name="J. Biol. Chem.">
        <title>Regulation of snf1 protein kinase in response to environmental stress.</title>
        <authorList>
            <person name="Hong S.-P."/>
            <person name="Carlson M."/>
        </authorList>
    </citation>
    <scope>FUNCTION</scope>
</reference>
<gene>
    <name type="primary">TOS3</name>
    <name type="ordered locus">YGL179C</name>
    <name type="ORF">G1618</name>
</gene>
<feature type="chain" id="PRO_0000086126" description="Serine/threonine-protein kinase TOS3">
    <location>
        <begin position="1"/>
        <end position="560"/>
    </location>
</feature>
<feature type="domain" description="Protein kinase" evidence="1">
    <location>
        <begin position="50"/>
        <end position="344"/>
    </location>
</feature>
<feature type="active site" description="Proton acceptor" evidence="1 2">
    <location>
        <position position="189"/>
    </location>
</feature>
<feature type="binding site" evidence="1">
    <location>
        <begin position="56"/>
        <end position="64"/>
    </location>
    <ligand>
        <name>ATP</name>
        <dbReference type="ChEBI" id="CHEBI:30616"/>
    </ligand>
</feature>
<feature type="binding site" evidence="1">
    <location>
        <position position="79"/>
    </location>
    <ligand>
        <name>ATP</name>
        <dbReference type="ChEBI" id="CHEBI:30616"/>
    </ligand>
</feature>
<dbReference type="EC" id="2.7.11.1"/>
<dbReference type="EMBL" id="X83690">
    <property type="protein sequence ID" value="CAA58659.1"/>
    <property type="molecule type" value="Genomic_DNA"/>
</dbReference>
<dbReference type="EMBL" id="Z72701">
    <property type="protein sequence ID" value="CAA96891.1"/>
    <property type="molecule type" value="Genomic_DNA"/>
</dbReference>
<dbReference type="EMBL" id="BK006941">
    <property type="protein sequence ID" value="DAA07935.1"/>
    <property type="molecule type" value="Genomic_DNA"/>
</dbReference>
<dbReference type="PIR" id="S57252">
    <property type="entry name" value="S57252"/>
</dbReference>
<dbReference type="RefSeq" id="NP_011336.3">
    <property type="nucleotide sequence ID" value="NM_001181044.3"/>
</dbReference>
<dbReference type="SMR" id="P43637"/>
<dbReference type="BioGRID" id="33075">
    <property type="interactions" value="146"/>
</dbReference>
<dbReference type="DIP" id="DIP-5033N"/>
<dbReference type="FunCoup" id="P43637">
    <property type="interactions" value="560"/>
</dbReference>
<dbReference type="IntAct" id="P43637">
    <property type="interactions" value="7"/>
</dbReference>
<dbReference type="STRING" id="4932.YGL179C"/>
<dbReference type="iPTMnet" id="P43637"/>
<dbReference type="PaxDb" id="4932-YGL179C"/>
<dbReference type="PeptideAtlas" id="P43637"/>
<dbReference type="EnsemblFungi" id="YGL179C_mRNA">
    <property type="protein sequence ID" value="YGL179C"/>
    <property type="gene ID" value="YGL179C"/>
</dbReference>
<dbReference type="GeneID" id="852696"/>
<dbReference type="KEGG" id="sce:YGL179C"/>
<dbReference type="AGR" id="SGD:S000003147"/>
<dbReference type="SGD" id="S000003147">
    <property type="gene designation" value="TOS3"/>
</dbReference>
<dbReference type="VEuPathDB" id="FungiDB:YGL179C"/>
<dbReference type="eggNOG" id="KOG0585">
    <property type="taxonomic scope" value="Eukaryota"/>
</dbReference>
<dbReference type="GeneTree" id="ENSGT00940000161828"/>
<dbReference type="HOGENOM" id="CLU_484098_0_0_1"/>
<dbReference type="InParanoid" id="P43637"/>
<dbReference type="OMA" id="GMTCKLA"/>
<dbReference type="OrthoDB" id="68483at2759"/>
<dbReference type="BioCyc" id="YEAST:G3O-30666-MONOMER"/>
<dbReference type="BioGRID-ORCS" id="852696">
    <property type="hits" value="0 hits in 3 CRISPR screens"/>
</dbReference>
<dbReference type="PRO" id="PR:P43637"/>
<dbReference type="Proteomes" id="UP000002311">
    <property type="component" value="Chromosome VII"/>
</dbReference>
<dbReference type="RNAct" id="P43637">
    <property type="molecule type" value="protein"/>
</dbReference>
<dbReference type="GO" id="GO:0005737">
    <property type="term" value="C:cytoplasm"/>
    <property type="evidence" value="ECO:0000314"/>
    <property type="project" value="SGD"/>
</dbReference>
<dbReference type="GO" id="GO:0005777">
    <property type="term" value="C:peroxisome"/>
    <property type="evidence" value="ECO:0000314"/>
    <property type="project" value="SGD"/>
</dbReference>
<dbReference type="GO" id="GO:0005524">
    <property type="term" value="F:ATP binding"/>
    <property type="evidence" value="ECO:0007669"/>
    <property type="project" value="UniProtKB-KW"/>
</dbReference>
<dbReference type="GO" id="GO:0004672">
    <property type="term" value="F:protein kinase activity"/>
    <property type="evidence" value="ECO:0007005"/>
    <property type="project" value="SGD"/>
</dbReference>
<dbReference type="GO" id="GO:0106310">
    <property type="term" value="F:protein serine kinase activity"/>
    <property type="evidence" value="ECO:0007669"/>
    <property type="project" value="RHEA"/>
</dbReference>
<dbReference type="GO" id="GO:0004674">
    <property type="term" value="F:protein serine/threonine kinase activity"/>
    <property type="evidence" value="ECO:0000314"/>
    <property type="project" value="SGD"/>
</dbReference>
<dbReference type="GO" id="GO:0042149">
    <property type="term" value="P:cellular response to glucose starvation"/>
    <property type="evidence" value="ECO:0000315"/>
    <property type="project" value="SGD"/>
</dbReference>
<dbReference type="GO" id="GO:1900180">
    <property type="term" value="P:regulation of protein localization to nucleus"/>
    <property type="evidence" value="ECO:0000315"/>
    <property type="project" value="SGD"/>
</dbReference>
<dbReference type="GO" id="GO:0007165">
    <property type="term" value="P:signal transduction"/>
    <property type="evidence" value="ECO:0000318"/>
    <property type="project" value="GO_Central"/>
</dbReference>
<dbReference type="CDD" id="cd14008">
    <property type="entry name" value="STKc_LKB1_CaMKK"/>
    <property type="match status" value="1"/>
</dbReference>
<dbReference type="FunFam" id="3.30.200.20:FF:000042">
    <property type="entry name" value="Aurora kinase A"/>
    <property type="match status" value="1"/>
</dbReference>
<dbReference type="FunFam" id="1.10.510.10:FF:000829">
    <property type="entry name" value="Serine/threonine-protein kinase TOS3"/>
    <property type="match status" value="1"/>
</dbReference>
<dbReference type="Gene3D" id="1.10.510.10">
    <property type="entry name" value="Transferase(Phosphotransferase) domain 1"/>
    <property type="match status" value="1"/>
</dbReference>
<dbReference type="InterPro" id="IPR030616">
    <property type="entry name" value="Aur-like"/>
</dbReference>
<dbReference type="InterPro" id="IPR011009">
    <property type="entry name" value="Kinase-like_dom_sf"/>
</dbReference>
<dbReference type="InterPro" id="IPR000719">
    <property type="entry name" value="Prot_kinase_dom"/>
</dbReference>
<dbReference type="InterPro" id="IPR017441">
    <property type="entry name" value="Protein_kinase_ATP_BS"/>
</dbReference>
<dbReference type="InterPro" id="IPR008271">
    <property type="entry name" value="Ser/Thr_kinase_AS"/>
</dbReference>
<dbReference type="PANTHER" id="PTHR24350">
    <property type="entry name" value="SERINE/THREONINE-PROTEIN KINASE IAL-RELATED"/>
    <property type="match status" value="1"/>
</dbReference>
<dbReference type="Pfam" id="PF00069">
    <property type="entry name" value="Pkinase"/>
    <property type="match status" value="1"/>
</dbReference>
<dbReference type="SMART" id="SM00220">
    <property type="entry name" value="S_TKc"/>
    <property type="match status" value="1"/>
</dbReference>
<dbReference type="SUPFAM" id="SSF56112">
    <property type="entry name" value="Protein kinase-like (PK-like)"/>
    <property type="match status" value="1"/>
</dbReference>
<dbReference type="PROSITE" id="PS00107">
    <property type="entry name" value="PROTEIN_KINASE_ATP"/>
    <property type="match status" value="1"/>
</dbReference>
<dbReference type="PROSITE" id="PS50011">
    <property type="entry name" value="PROTEIN_KINASE_DOM"/>
    <property type="match status" value="1"/>
</dbReference>
<dbReference type="PROSITE" id="PS00108">
    <property type="entry name" value="PROTEIN_KINASE_ST"/>
    <property type="match status" value="1"/>
</dbReference>
<comment type="function">
    <text evidence="3 6 7 8 9 10 11 12 13 14">One of the three SNF1 protein kinases (with SAK1 and ELM1) which are required for growth on nonfermentable carbon sources and nonpreferred sugars and for response to environmental stress. Activates SNF1 by phosphorylation of its activation-loop 'Thr-210'. Required for the regulation by SNF1 of the transcription of a large set of genes, the modification the activity of metabolic enzymes, and the control of various nutrient-responsive cellular developmental processes. Also phosphorylates GAL83, MIG1 and SIP2.</text>
</comment>
<comment type="catalytic activity">
    <reaction>
        <text>L-seryl-[protein] + ATP = O-phospho-L-seryl-[protein] + ADP + H(+)</text>
        <dbReference type="Rhea" id="RHEA:17989"/>
        <dbReference type="Rhea" id="RHEA-COMP:9863"/>
        <dbReference type="Rhea" id="RHEA-COMP:11604"/>
        <dbReference type="ChEBI" id="CHEBI:15378"/>
        <dbReference type="ChEBI" id="CHEBI:29999"/>
        <dbReference type="ChEBI" id="CHEBI:30616"/>
        <dbReference type="ChEBI" id="CHEBI:83421"/>
        <dbReference type="ChEBI" id="CHEBI:456216"/>
        <dbReference type="EC" id="2.7.11.1"/>
    </reaction>
</comment>
<comment type="catalytic activity">
    <reaction>
        <text>L-threonyl-[protein] + ATP = O-phospho-L-threonyl-[protein] + ADP + H(+)</text>
        <dbReference type="Rhea" id="RHEA:46608"/>
        <dbReference type="Rhea" id="RHEA-COMP:11060"/>
        <dbReference type="Rhea" id="RHEA-COMP:11605"/>
        <dbReference type="ChEBI" id="CHEBI:15378"/>
        <dbReference type="ChEBI" id="CHEBI:30013"/>
        <dbReference type="ChEBI" id="CHEBI:30616"/>
        <dbReference type="ChEBI" id="CHEBI:61977"/>
        <dbReference type="ChEBI" id="CHEBI:456216"/>
        <dbReference type="EC" id="2.7.11.1"/>
    </reaction>
</comment>
<comment type="domain">
    <text evidence="12">The C-terminus (residues 351 to 560) is required for efficient SNF1 pathway signaling.</text>
</comment>
<comment type="PTM">
    <text evidence="4 5">Autophosphorylated.</text>
</comment>
<comment type="similarity">
    <text evidence="1">Belongs to the protein kinase superfamily. Ser/Thr protein kinase family.</text>
</comment>
<evidence type="ECO:0000255" key="1">
    <source>
        <dbReference type="PROSITE-ProRule" id="PRU00159"/>
    </source>
</evidence>
<evidence type="ECO:0000255" key="2">
    <source>
        <dbReference type="PROSITE-ProRule" id="PRU10027"/>
    </source>
</evidence>
<evidence type="ECO:0000269" key="3">
    <source>
    </source>
</evidence>
<evidence type="ECO:0000269" key="4">
    <source>
    </source>
</evidence>
<evidence type="ECO:0000269" key="5">
    <source>
    </source>
</evidence>
<evidence type="ECO:0000269" key="6">
    <source>
    </source>
</evidence>
<evidence type="ECO:0000269" key="7">
    <source>
    </source>
</evidence>
<evidence type="ECO:0000269" key="8">
    <source>
    </source>
</evidence>
<evidence type="ECO:0000269" key="9">
    <source>
    </source>
</evidence>
<evidence type="ECO:0000269" key="10">
    <source>
    </source>
</evidence>
<evidence type="ECO:0000269" key="11">
    <source>
    </source>
</evidence>
<evidence type="ECO:0000269" key="12">
    <source>
    </source>
</evidence>
<evidence type="ECO:0000269" key="13">
    <source>
    </source>
</evidence>
<evidence type="ECO:0000269" key="14">
    <source>
    </source>
</evidence>
<organism>
    <name type="scientific">Saccharomyces cerevisiae (strain ATCC 204508 / S288c)</name>
    <name type="common">Baker's yeast</name>
    <dbReference type="NCBI Taxonomy" id="559292"/>
    <lineage>
        <taxon>Eukaryota</taxon>
        <taxon>Fungi</taxon>
        <taxon>Dikarya</taxon>
        <taxon>Ascomycota</taxon>
        <taxon>Saccharomycotina</taxon>
        <taxon>Saccharomycetes</taxon>
        <taxon>Saccharomycetales</taxon>
        <taxon>Saccharomycetaceae</taxon>
        <taxon>Saccharomyces</taxon>
    </lineage>
</organism>
<sequence length="560" mass="62091">MVLLKEPVQPLPRSSLLYNNASNSSSRIKETRKVKLLYNPLTKRQILNNFEILATLGNGQYGKVKLARDLGTGALVAIKILNRFEKRSGYSLQLKVENPRVNQEIEVMKRCHHENVVELYEILNDPESTKVYLVLEYCSRGPVKWCPENKMEIKAVGPSILTFQQSRKVVLDVVSGLEYLHSQGITHRDIKPSNLLISSNGTVKISDFGVAMSTATGSTNIQSSHEQLLKSRALGTPAFFAPELCSTEKEYSCSSAIDIWSLGVTIYCLLFGKLPFNANSGLELFDSIINKPLEFPSYEEMLNGATSGITMEEYTDAKDLLKKLLQKDPDKRIKLADIKVHPFMCHYGKSDAASVLTNLETFHELKVSPPSSCKRVELVSLPVNSSFASLDSVYMENFDHNNLRTGADRNSTYSPSIYDANTLSPSAYHNIGSRESSYSSFSSFTSSTAFASQISIQDAPAIGDQQCLIGESGSSLRVNSCEFPQYTTMSPVGEYPFESTEASLSSTLTPVGNVPQRIKAHLVEGKSNSKDDLRIEADASLVFEASDAQRTRRRMSLYKL</sequence>
<protein>
    <recommendedName>
        <fullName>Serine/threonine-protein kinase TOS3</fullName>
        <ecNumber>2.7.11.1</ecNumber>
    </recommendedName>
    <alternativeName>
        <fullName>Target of SBF protein 3</fullName>
    </alternativeName>
</protein>
<name>TOS3_YEAST</name>
<proteinExistence type="evidence at protein level"/>
<keyword id="KW-0067">ATP-binding</keyword>
<keyword id="KW-0418">Kinase</keyword>
<keyword id="KW-0547">Nucleotide-binding</keyword>
<keyword id="KW-0597">Phosphoprotein</keyword>
<keyword id="KW-1185">Reference proteome</keyword>
<keyword id="KW-0723">Serine/threonine-protein kinase</keyword>
<keyword id="KW-0346">Stress response</keyword>
<keyword id="KW-0808">Transferase</keyword>
<accession>P43637</accession>
<accession>D6VTX4</accession>